<reference key="1">
    <citation type="journal article" date="2006" name="Proc. Natl. Acad. Sci. U.S.A.">
        <title>Comparative genomics of the lactic acid bacteria.</title>
        <authorList>
            <person name="Makarova K.S."/>
            <person name="Slesarev A."/>
            <person name="Wolf Y.I."/>
            <person name="Sorokin A."/>
            <person name="Mirkin B."/>
            <person name="Koonin E.V."/>
            <person name="Pavlov A."/>
            <person name="Pavlova N."/>
            <person name="Karamychev V."/>
            <person name="Polouchine N."/>
            <person name="Shakhova V."/>
            <person name="Grigoriev I."/>
            <person name="Lou Y."/>
            <person name="Rohksar D."/>
            <person name="Lucas S."/>
            <person name="Huang K."/>
            <person name="Goodstein D.M."/>
            <person name="Hawkins T."/>
            <person name="Plengvidhya V."/>
            <person name="Welker D."/>
            <person name="Hughes J."/>
            <person name="Goh Y."/>
            <person name="Benson A."/>
            <person name="Baldwin K."/>
            <person name="Lee J.-H."/>
            <person name="Diaz-Muniz I."/>
            <person name="Dosti B."/>
            <person name="Smeianov V."/>
            <person name="Wechter W."/>
            <person name="Barabote R."/>
            <person name="Lorca G."/>
            <person name="Altermann E."/>
            <person name="Barrangou R."/>
            <person name="Ganesan B."/>
            <person name="Xie Y."/>
            <person name="Rawsthorne H."/>
            <person name="Tamir D."/>
            <person name="Parker C."/>
            <person name="Breidt F."/>
            <person name="Broadbent J.R."/>
            <person name="Hutkins R."/>
            <person name="O'Sullivan D."/>
            <person name="Steele J."/>
            <person name="Unlu G."/>
            <person name="Saier M.H. Jr."/>
            <person name="Klaenhammer T."/>
            <person name="Richardson P."/>
            <person name="Kozyavkin S."/>
            <person name="Weimer B.C."/>
            <person name="Mills D.A."/>
        </authorList>
    </citation>
    <scope>NUCLEOTIDE SEQUENCE [LARGE SCALE GENOMIC DNA]</scope>
    <source>
        <strain>ATCC 367 / BCRC 12310 / CIP 105137 / JCM 1170 / LMG 11437 / NCIMB 947 / NCTC 947</strain>
    </source>
</reference>
<accession>Q03QL3</accession>
<proteinExistence type="inferred from homology"/>
<protein>
    <recommendedName>
        <fullName evidence="1">Peptide deformylase</fullName>
        <shortName evidence="1">PDF</shortName>
        <ecNumber evidence="1">3.5.1.88</ecNumber>
    </recommendedName>
    <alternativeName>
        <fullName evidence="1">Polypeptide deformylase</fullName>
    </alternativeName>
</protein>
<organism>
    <name type="scientific">Levilactobacillus brevis (strain ATCC 367 / BCRC 12310 / CIP 105137 / JCM 1170 / LMG 11437 / NCIMB 947 / NCTC 947)</name>
    <name type="common">Lactobacillus brevis</name>
    <dbReference type="NCBI Taxonomy" id="387344"/>
    <lineage>
        <taxon>Bacteria</taxon>
        <taxon>Bacillati</taxon>
        <taxon>Bacillota</taxon>
        <taxon>Bacilli</taxon>
        <taxon>Lactobacillales</taxon>
        <taxon>Lactobacillaceae</taxon>
        <taxon>Levilactobacillus</taxon>
    </lineage>
</organism>
<comment type="function">
    <text evidence="1">Removes the formyl group from the N-terminal Met of newly synthesized proteins. Requires at least a dipeptide for an efficient rate of reaction. N-terminal L-methionine is a prerequisite for activity but the enzyme has broad specificity at other positions.</text>
</comment>
<comment type="catalytic activity">
    <reaction evidence="1">
        <text>N-terminal N-formyl-L-methionyl-[peptide] + H2O = N-terminal L-methionyl-[peptide] + formate</text>
        <dbReference type="Rhea" id="RHEA:24420"/>
        <dbReference type="Rhea" id="RHEA-COMP:10639"/>
        <dbReference type="Rhea" id="RHEA-COMP:10640"/>
        <dbReference type="ChEBI" id="CHEBI:15377"/>
        <dbReference type="ChEBI" id="CHEBI:15740"/>
        <dbReference type="ChEBI" id="CHEBI:49298"/>
        <dbReference type="ChEBI" id="CHEBI:64731"/>
        <dbReference type="EC" id="3.5.1.88"/>
    </reaction>
</comment>
<comment type="cofactor">
    <cofactor evidence="1">
        <name>Fe(2+)</name>
        <dbReference type="ChEBI" id="CHEBI:29033"/>
    </cofactor>
    <text evidence="1">Binds 1 Fe(2+) ion.</text>
</comment>
<comment type="similarity">
    <text evidence="1">Belongs to the polypeptide deformylase family.</text>
</comment>
<dbReference type="EC" id="3.5.1.88" evidence="1"/>
<dbReference type="EMBL" id="CP000416">
    <property type="protein sequence ID" value="ABJ64509.1"/>
    <property type="molecule type" value="Genomic_DNA"/>
</dbReference>
<dbReference type="RefSeq" id="WP_011668082.1">
    <property type="nucleotide sequence ID" value="NC_008497.1"/>
</dbReference>
<dbReference type="SMR" id="Q03QL3"/>
<dbReference type="STRING" id="387344.LVIS_1411"/>
<dbReference type="GeneID" id="56993183"/>
<dbReference type="KEGG" id="lbr:LVIS_1411"/>
<dbReference type="eggNOG" id="COG0242">
    <property type="taxonomic scope" value="Bacteria"/>
</dbReference>
<dbReference type="HOGENOM" id="CLU_061901_4_0_9"/>
<dbReference type="Proteomes" id="UP000001652">
    <property type="component" value="Chromosome"/>
</dbReference>
<dbReference type="GO" id="GO:0046872">
    <property type="term" value="F:metal ion binding"/>
    <property type="evidence" value="ECO:0007669"/>
    <property type="project" value="UniProtKB-KW"/>
</dbReference>
<dbReference type="GO" id="GO:0042586">
    <property type="term" value="F:peptide deformylase activity"/>
    <property type="evidence" value="ECO:0007669"/>
    <property type="project" value="UniProtKB-UniRule"/>
</dbReference>
<dbReference type="GO" id="GO:0043686">
    <property type="term" value="P:co-translational protein modification"/>
    <property type="evidence" value="ECO:0007669"/>
    <property type="project" value="TreeGrafter"/>
</dbReference>
<dbReference type="GO" id="GO:0006412">
    <property type="term" value="P:translation"/>
    <property type="evidence" value="ECO:0007669"/>
    <property type="project" value="UniProtKB-UniRule"/>
</dbReference>
<dbReference type="CDD" id="cd00487">
    <property type="entry name" value="Pep_deformylase"/>
    <property type="match status" value="1"/>
</dbReference>
<dbReference type="FunFam" id="3.90.45.10:FF:000002">
    <property type="entry name" value="Peptide deformylase"/>
    <property type="match status" value="1"/>
</dbReference>
<dbReference type="Gene3D" id="3.90.45.10">
    <property type="entry name" value="Peptide deformylase"/>
    <property type="match status" value="1"/>
</dbReference>
<dbReference type="HAMAP" id="MF_00163">
    <property type="entry name" value="Pep_deformylase"/>
    <property type="match status" value="1"/>
</dbReference>
<dbReference type="InterPro" id="IPR023635">
    <property type="entry name" value="Peptide_deformylase"/>
</dbReference>
<dbReference type="InterPro" id="IPR036821">
    <property type="entry name" value="Peptide_deformylase_sf"/>
</dbReference>
<dbReference type="NCBIfam" id="TIGR00079">
    <property type="entry name" value="pept_deformyl"/>
    <property type="match status" value="1"/>
</dbReference>
<dbReference type="PANTHER" id="PTHR10458">
    <property type="entry name" value="PEPTIDE DEFORMYLASE"/>
    <property type="match status" value="1"/>
</dbReference>
<dbReference type="PANTHER" id="PTHR10458:SF8">
    <property type="entry name" value="PEPTIDE DEFORMYLASE 2"/>
    <property type="match status" value="1"/>
</dbReference>
<dbReference type="Pfam" id="PF01327">
    <property type="entry name" value="Pep_deformylase"/>
    <property type="match status" value="1"/>
</dbReference>
<dbReference type="PIRSF" id="PIRSF004749">
    <property type="entry name" value="Pep_def"/>
    <property type="match status" value="1"/>
</dbReference>
<dbReference type="PRINTS" id="PR01576">
    <property type="entry name" value="PDEFORMYLASE"/>
</dbReference>
<dbReference type="SUPFAM" id="SSF56420">
    <property type="entry name" value="Peptide deformylase"/>
    <property type="match status" value="1"/>
</dbReference>
<sequence>MFLMKDIVRDGDPVLRQEAADVTFPLSEEDQQLAKDLMEYLVVSQDPEQCKKYGLRAGVGLAAPQVGVSKKMASVLVPPVEEDGKSPFTDVIINPVIISESVQAGALTEGEGCLSVDKDVPGFVPRHDRITLRYYDVNGEKHQVRLKNYPAIVCQHEIDHLHGTLFYDHINKDQPFSRDDDMIMIE</sequence>
<name>DEF_LEVBA</name>
<feature type="chain" id="PRO_0000301042" description="Peptide deformylase">
    <location>
        <begin position="1"/>
        <end position="186"/>
    </location>
</feature>
<feature type="active site" evidence="1">
    <location>
        <position position="157"/>
    </location>
</feature>
<feature type="binding site" evidence="1">
    <location>
        <position position="113"/>
    </location>
    <ligand>
        <name>Fe cation</name>
        <dbReference type="ChEBI" id="CHEBI:24875"/>
    </ligand>
</feature>
<feature type="binding site" evidence="1">
    <location>
        <position position="156"/>
    </location>
    <ligand>
        <name>Fe cation</name>
        <dbReference type="ChEBI" id="CHEBI:24875"/>
    </ligand>
</feature>
<feature type="binding site" evidence="1">
    <location>
        <position position="160"/>
    </location>
    <ligand>
        <name>Fe cation</name>
        <dbReference type="ChEBI" id="CHEBI:24875"/>
    </ligand>
</feature>
<evidence type="ECO:0000255" key="1">
    <source>
        <dbReference type="HAMAP-Rule" id="MF_00163"/>
    </source>
</evidence>
<keyword id="KW-0378">Hydrolase</keyword>
<keyword id="KW-0408">Iron</keyword>
<keyword id="KW-0479">Metal-binding</keyword>
<keyword id="KW-0648">Protein biosynthesis</keyword>
<keyword id="KW-1185">Reference proteome</keyword>
<gene>
    <name evidence="1" type="primary">def</name>
    <name type="ordered locus">LVIS_1411</name>
</gene>